<reference key="1">
    <citation type="book" date="2006" name="Gram positive pathogens, 2nd edition">
        <title>The Staphylococcus aureus NCTC 8325 genome.</title>
        <editorList>
            <person name="Fischetti V."/>
            <person name="Novick R."/>
            <person name="Ferretti J."/>
            <person name="Portnoy D."/>
            <person name="Rood J."/>
        </editorList>
        <authorList>
            <person name="Gillaspy A.F."/>
            <person name="Worrell V."/>
            <person name="Orvis J."/>
            <person name="Roe B.A."/>
            <person name="Dyer D.W."/>
            <person name="Iandolo J.J."/>
        </authorList>
    </citation>
    <scope>NUCLEOTIDE SEQUENCE [LARGE SCALE GENOMIC DNA]</scope>
    <source>
        <strain>NCTC 8325 / PS 47</strain>
    </source>
</reference>
<reference key="2">
    <citation type="journal article" date="2001" name="Bioorg. Med. Chem. Lett.">
        <title>1,4-Disubstituted imidazoles are potential antibacterial agents functioning as inhibitors of enoyl acyl carrier protein reductase (FabI).</title>
        <authorList>
            <person name="Heerding D.A."/>
            <person name="Chan G."/>
            <person name="DeWolf W.E."/>
            <person name="Fosberry A.P."/>
            <person name="Janson C.A."/>
            <person name="Jaworski D.D."/>
            <person name="McManus E."/>
            <person name="Miller W.H."/>
            <person name="Moore T.D."/>
            <person name="Payne D.J."/>
            <person name="Qiu X."/>
            <person name="Rittenhouse S.F."/>
            <person name="Slater-Radosti C."/>
            <person name="Smith W."/>
            <person name="Takata D.T."/>
            <person name="Vaidya K.S."/>
            <person name="Yuan C.C."/>
            <person name="Huffman W.F."/>
        </authorList>
    </citation>
    <scope>ACTIVITY REGULATION</scope>
    <source>
        <strain>ATCC 9144 / Oxford / NCIB 6571 / NCTC 6571</strain>
    </source>
</reference>
<reference key="3">
    <citation type="journal article" date="2002" name="J. Med. Chem.">
        <title>Discovery of aminopyridine-based inhibitors of bacterial enoyl-ACP reductase (FabI).</title>
        <authorList>
            <person name="Miller W.H."/>
            <person name="Seefeld M.A."/>
            <person name="Newlander K.A."/>
            <person name="Uzinskas I.N."/>
            <person name="Burgess W.J."/>
            <person name="Heerding D.A."/>
            <person name="Yuan C.C."/>
            <person name="Head M.S."/>
            <person name="Payne D.J."/>
            <person name="Rittenhouse S.F."/>
            <person name="Moore T.D."/>
            <person name="Pearson S.C."/>
            <person name="Berry V."/>
            <person name="DeWolf W.E. Jr."/>
            <person name="Keller P.M."/>
            <person name="Polizzi B.J."/>
            <person name="Qiu X."/>
            <person name="Janson C.A."/>
            <person name="Huffman W.F."/>
        </authorList>
    </citation>
    <scope>ACTIVITY REGULATION</scope>
</reference>
<reference key="4">
    <citation type="journal article" date="2003" name="J. Med. Chem.">
        <title>Indole naphthyridinones as inhibitors of bacterial enoyl-ACP reductases FabI and FabK.</title>
        <authorList>
            <person name="Seefeld M.A."/>
            <person name="Miller W.H."/>
            <person name="Newlander K.A."/>
            <person name="Burgess W.J."/>
            <person name="DeWolf W.E. Jr."/>
            <person name="Elkins P.A."/>
            <person name="Head M.S."/>
            <person name="Jakas D.R."/>
            <person name="Janson C.A."/>
            <person name="Keller P.M."/>
            <person name="Manley P.J."/>
            <person name="Moore T.D."/>
            <person name="Payne D.J."/>
            <person name="Pearson S."/>
            <person name="Polizzi B.J."/>
            <person name="Qiu X."/>
            <person name="Rittenhouse S.F."/>
            <person name="Uzinskas I.N."/>
            <person name="Wallis N.G."/>
            <person name="Huffman W.F."/>
        </authorList>
    </citation>
    <scope>ACTIVITY REGULATION</scope>
</reference>
<reference key="5">
    <citation type="journal article" date="2008" name="Biochemistry">
        <title>Mechanism and inhibition of saFabI, the enoyl reductase from Staphylococcus aureus.</title>
        <authorList>
            <person name="Xu H."/>
            <person name="Sullivan T.J."/>
            <person name="Sekiguchi J."/>
            <person name="Kirikae T."/>
            <person name="Ojima I."/>
            <person name="Stratton C.F."/>
            <person name="Mao W."/>
            <person name="Rock F.L."/>
            <person name="Alley M.R."/>
            <person name="Johnson F."/>
            <person name="Walker S.G."/>
            <person name="Tonge P.J."/>
        </authorList>
    </citation>
    <scope>FUNCTION AS AN ENOYL-ACP REDUCTASE</scope>
    <scope>MUTAGENESIS OF ARG-40; LYS-41; ALA-95; ILE-193 AND PHE-204</scope>
    <scope>CATALYTIC ACTIVITY</scope>
    <scope>BIOPHYSICOCHEMICAL PROPERTIES</scope>
    <scope>ACTIVITY REGULATION</scope>
    <scope>REACTION MECHANISM</scope>
    <scope>SUBSTRATE SPECIFICITY</scope>
</reference>
<name>FABI_STAA8</name>
<evidence type="ECO:0000250" key="1"/>
<evidence type="ECO:0000269" key="2">
    <source>
    </source>
</evidence>
<evidence type="ECO:0000269" key="3">
    <source>
    </source>
</evidence>
<evidence type="ECO:0000269" key="4">
    <source>
    </source>
</evidence>
<evidence type="ECO:0000269" key="5">
    <source>
    </source>
</evidence>
<evidence type="ECO:0000305" key="6"/>
<evidence type="ECO:0007829" key="7">
    <source>
        <dbReference type="PDB" id="6YUR"/>
    </source>
</evidence>
<dbReference type="EC" id="1.3.1.39"/>
<dbReference type="EMBL" id="CP000253">
    <property type="protein sequence ID" value="ABD30072.1"/>
    <property type="molecule type" value="Genomic_DNA"/>
</dbReference>
<dbReference type="RefSeq" id="WP_000933197.1">
    <property type="nucleotide sequence ID" value="NZ_LS483365.1"/>
</dbReference>
<dbReference type="RefSeq" id="YP_499500.1">
    <property type="nucleotide sequence ID" value="NC_007795.1"/>
</dbReference>
<dbReference type="PDB" id="6TBB">
    <property type="method" value="X-ray"/>
    <property type="resolution" value="2.45 A"/>
    <property type="chains" value="A/B/C/D/E/F/G/H=3-256"/>
</dbReference>
<dbReference type="PDB" id="6TBC">
    <property type="method" value="X-ray"/>
    <property type="resolution" value="2.55 A"/>
    <property type="chains" value="A/B/C/D/E/F/G/H=3-256"/>
</dbReference>
<dbReference type="PDB" id="6YUR">
    <property type="method" value="X-ray"/>
    <property type="resolution" value="1.96 A"/>
    <property type="chains" value="A/B/C/D/E/F/G/H=1-256"/>
</dbReference>
<dbReference type="PDBsum" id="6TBB"/>
<dbReference type="PDBsum" id="6TBC"/>
<dbReference type="PDBsum" id="6YUR"/>
<dbReference type="SMR" id="Q2FZQ3"/>
<dbReference type="STRING" id="93061.SAOUHSC_00947"/>
<dbReference type="BindingDB" id="Q2FZQ3"/>
<dbReference type="PaxDb" id="1280-SAXN108_1007"/>
<dbReference type="GeneID" id="3920658"/>
<dbReference type="KEGG" id="sao:SAOUHSC_00947"/>
<dbReference type="PATRIC" id="fig|93061.5.peg.868"/>
<dbReference type="eggNOG" id="COG0623">
    <property type="taxonomic scope" value="Bacteria"/>
</dbReference>
<dbReference type="HOGENOM" id="CLU_010194_10_1_9"/>
<dbReference type="OrthoDB" id="9803628at2"/>
<dbReference type="SABIO-RK" id="Q2FZQ3"/>
<dbReference type="UniPathway" id="UPA00094"/>
<dbReference type="PHI-base" id="PHI:7915"/>
<dbReference type="Proteomes" id="UP000008816">
    <property type="component" value="Chromosome"/>
</dbReference>
<dbReference type="GO" id="GO:0004318">
    <property type="term" value="F:enoyl-[acyl-carrier-protein] reductase (NADH) activity"/>
    <property type="evidence" value="ECO:0000314"/>
    <property type="project" value="UniProtKB"/>
</dbReference>
<dbReference type="GO" id="GO:0141148">
    <property type="term" value="F:enoyl-[acyl-carrier-protein] reductase (NADPH) activity"/>
    <property type="evidence" value="ECO:0007669"/>
    <property type="project" value="UniProtKB-EC"/>
</dbReference>
<dbReference type="GO" id="GO:0042802">
    <property type="term" value="F:identical protein binding"/>
    <property type="evidence" value="ECO:0000250"/>
    <property type="project" value="UniProtKB"/>
</dbReference>
<dbReference type="GO" id="GO:0050661">
    <property type="term" value="F:NADP binding"/>
    <property type="evidence" value="ECO:0000314"/>
    <property type="project" value="UniProtKB"/>
</dbReference>
<dbReference type="GO" id="GO:0030497">
    <property type="term" value="P:fatty acid elongation"/>
    <property type="evidence" value="ECO:0000250"/>
    <property type="project" value="UniProtKB"/>
</dbReference>
<dbReference type="CDD" id="cd05372">
    <property type="entry name" value="ENR_SDR"/>
    <property type="match status" value="1"/>
</dbReference>
<dbReference type="FunFam" id="1.10.8.400:FF:000001">
    <property type="entry name" value="Enoyl-[acyl-carrier-protein] reductase [NADH]"/>
    <property type="match status" value="1"/>
</dbReference>
<dbReference type="FunFam" id="3.40.50.720:FF:000169">
    <property type="entry name" value="Enoyl-[acyl-carrier-protein] reductase [NADH]"/>
    <property type="match status" value="1"/>
</dbReference>
<dbReference type="Gene3D" id="1.10.8.400">
    <property type="entry name" value="Enoyl acyl carrier protein reductase"/>
    <property type="match status" value="1"/>
</dbReference>
<dbReference type="Gene3D" id="3.40.50.720">
    <property type="entry name" value="NAD(P)-binding Rossmann-like Domain"/>
    <property type="match status" value="1"/>
</dbReference>
<dbReference type="InterPro" id="IPR014358">
    <property type="entry name" value="Enoyl-ACP_Rdtase_NADH"/>
</dbReference>
<dbReference type="InterPro" id="IPR036291">
    <property type="entry name" value="NAD(P)-bd_dom_sf"/>
</dbReference>
<dbReference type="InterPro" id="IPR002347">
    <property type="entry name" value="SDR_fam"/>
</dbReference>
<dbReference type="NCBIfam" id="NF006369">
    <property type="entry name" value="PRK08594.1"/>
    <property type="match status" value="1"/>
</dbReference>
<dbReference type="PANTHER" id="PTHR43159">
    <property type="entry name" value="ENOYL-[ACYL-CARRIER-PROTEIN] REDUCTASE"/>
    <property type="match status" value="1"/>
</dbReference>
<dbReference type="PANTHER" id="PTHR43159:SF2">
    <property type="entry name" value="ENOYL-[ACYL-CARRIER-PROTEIN] REDUCTASE [NADH], CHLOROPLASTIC"/>
    <property type="match status" value="1"/>
</dbReference>
<dbReference type="Pfam" id="PF13561">
    <property type="entry name" value="adh_short_C2"/>
    <property type="match status" value="1"/>
</dbReference>
<dbReference type="PIRSF" id="PIRSF000094">
    <property type="entry name" value="Enoyl-ACP_rdct"/>
    <property type="match status" value="1"/>
</dbReference>
<dbReference type="PRINTS" id="PR00081">
    <property type="entry name" value="GDHRDH"/>
</dbReference>
<dbReference type="SUPFAM" id="SSF51735">
    <property type="entry name" value="NAD(P)-binding Rossmann-fold domains"/>
    <property type="match status" value="1"/>
</dbReference>
<organism>
    <name type="scientific">Staphylococcus aureus (strain NCTC 8325 / PS 47)</name>
    <dbReference type="NCBI Taxonomy" id="93061"/>
    <lineage>
        <taxon>Bacteria</taxon>
        <taxon>Bacillati</taxon>
        <taxon>Bacillota</taxon>
        <taxon>Bacilli</taxon>
        <taxon>Bacillales</taxon>
        <taxon>Staphylococcaceae</taxon>
        <taxon>Staphylococcus</taxon>
    </lineage>
</organism>
<comment type="function">
    <text evidence="1 5">Catalyzes the reduction of a carbon-carbon double bond in an enoyl moiety that is covalently linked to an acyl carrier protein (ACP). It has a preference for a long chain (C12) substrate compared to the shorter (C4) acyl group. Involved in the elongation cycle of fatty acid which are used in the lipid metabolism (By similarity).</text>
</comment>
<comment type="catalytic activity">
    <reaction evidence="5">
        <text>a 2,3-saturated acyl-[ACP] + NADP(+) = a (2E)-enoyl-[ACP] + NADPH + H(+)</text>
        <dbReference type="Rhea" id="RHEA:22564"/>
        <dbReference type="Rhea" id="RHEA-COMP:9925"/>
        <dbReference type="Rhea" id="RHEA-COMP:9926"/>
        <dbReference type="ChEBI" id="CHEBI:15378"/>
        <dbReference type="ChEBI" id="CHEBI:57783"/>
        <dbReference type="ChEBI" id="CHEBI:58349"/>
        <dbReference type="ChEBI" id="CHEBI:78784"/>
        <dbReference type="ChEBI" id="CHEBI:78785"/>
        <dbReference type="EC" id="1.3.1.39"/>
    </reaction>
</comment>
<comment type="activity regulation">
    <text evidence="2 3 4 5">Inhibited by 1,4-disubstituted imidazoles, 1,4-benzodiazepine, naphthyridinone derivatives, triclosan and its diphenyl ether analgues.</text>
</comment>
<comment type="biophysicochemical properties">
    <kinetics>
        <KM evidence="5">4.5 uM for dodecenoyl ACP (DD-ACP)(with NADPH at 25 degrees Celsius and pH 7.8)</KM>
        <KM evidence="5">70.8 uM for NADPH (with DD-ACP at 25 degrees Celsius and pH 7.8)</KM>
    </kinetics>
</comment>
<comment type="pathway">
    <text>Lipid metabolism; fatty acid biosynthesis.</text>
</comment>
<comment type="subunit">
    <text evidence="1">Homotetramer.</text>
</comment>
<comment type="miscellaneous">
    <text>Follows a sequential ordered bi-bi catalytic mechanism.</text>
</comment>
<comment type="similarity">
    <text evidence="6">Belongs to the short-chain dehydrogenases/reductases (SDR) family. FabI subfamily.</text>
</comment>
<accession>Q2FZQ3</accession>
<proteinExistence type="evidence at protein level"/>
<feature type="chain" id="PRO_0000407978" description="Enoyl-[acyl-carrier-protein] reductase [NADPH] FabI">
    <location>
        <begin position="1"/>
        <end position="256"/>
    </location>
</feature>
<feature type="active site" description="Proton acceptor" evidence="1">
    <location>
        <position position="147"/>
    </location>
</feature>
<feature type="active site" description="Proton acceptor" evidence="1">
    <location>
        <position position="157"/>
    </location>
</feature>
<feature type="binding site" evidence="1">
    <location>
        <position position="13"/>
    </location>
    <ligand>
        <name>NADP(+)</name>
        <dbReference type="ChEBI" id="CHEBI:58349"/>
    </ligand>
</feature>
<feature type="binding site" evidence="1">
    <location>
        <begin position="19"/>
        <end position="20"/>
    </location>
    <ligand>
        <name>NADP(+)</name>
        <dbReference type="ChEBI" id="CHEBI:58349"/>
    </ligand>
</feature>
<feature type="binding site" evidence="1">
    <location>
        <begin position="40"/>
        <end position="44"/>
    </location>
    <ligand>
        <name>NADP(+)</name>
        <dbReference type="ChEBI" id="CHEBI:58349"/>
    </ligand>
</feature>
<feature type="binding site" evidence="1">
    <location>
        <begin position="66"/>
        <end position="67"/>
    </location>
    <ligand>
        <name>NADP(+)</name>
        <dbReference type="ChEBI" id="CHEBI:58349"/>
    </ligand>
</feature>
<feature type="binding site" evidence="1">
    <location>
        <position position="94"/>
    </location>
    <ligand>
        <name>NADP(+)</name>
        <dbReference type="ChEBI" id="CHEBI:58349"/>
    </ligand>
</feature>
<feature type="binding site" evidence="1">
    <location>
        <position position="97"/>
    </location>
    <ligand>
        <name>substrate</name>
    </ligand>
</feature>
<feature type="binding site" evidence="1">
    <location>
        <position position="164"/>
    </location>
    <ligand>
        <name>NADP(+)</name>
        <dbReference type="ChEBI" id="CHEBI:58349"/>
    </ligand>
</feature>
<feature type="binding site" evidence="1">
    <location>
        <begin position="193"/>
        <end position="197"/>
    </location>
    <ligand>
        <name>NADP(+)</name>
        <dbReference type="ChEBI" id="CHEBI:58349"/>
    </ligand>
</feature>
<feature type="site" description="Critical for cofactor specificity">
    <location>
        <position position="40"/>
    </location>
</feature>
<feature type="site" description="Critical for cofactor specificity">
    <location>
        <position position="41"/>
    </location>
</feature>
<feature type="site" description="Involved in acyl-ACP binding" evidence="1">
    <location>
        <position position="205"/>
    </location>
</feature>
<feature type="mutagenesis site" description="Exhibits an 50-fold decrease in kcat/ Km for NADPH, whereas kcat/Km for NADH increases by 5-7-fold." evidence="5">
    <original>R</original>
    <variation>Q</variation>
    <location>
        <position position="40"/>
    </location>
</feature>
<feature type="mutagenesis site" description="Exhibits an 50-fold decrease in kcat/ Km for NADPH, whereas kcat/Km for NADH increases by 5-7-fold." evidence="5">
    <original>K</original>
    <variation>N</variation>
    <location>
        <position position="41"/>
    </location>
</feature>
<feature type="mutagenesis site" description="Exhibits an 240-fold decrease in kcat/ Km for NADPH, whereas kcat/Km for DD-ACP decreases only by 18-fold." evidence="5">
    <original>A</original>
    <variation>V</variation>
    <location>
        <position position="95"/>
    </location>
</feature>
<feature type="mutagenesis site" description="Exhibits an 13-fold decrease in kcat/ Km for NADPH, whereas kcat/Km for DD-ACP decreases only by 6-fold." evidence="5">
    <original>I</original>
    <variation>S</variation>
    <location>
        <position position="193"/>
    </location>
</feature>
<feature type="mutagenesis site" description="Exhibits an 10-fold decrease in kcat/ Km for NADPH, whereas kcat/Km for DD-ACP decreases only by 4-fold." evidence="5">
    <original>F</original>
    <variation>S</variation>
    <location>
        <position position="204"/>
    </location>
</feature>
<feature type="strand" evidence="7">
    <location>
        <begin position="8"/>
        <end position="12"/>
    </location>
</feature>
<feature type="helix" evidence="7">
    <location>
        <begin position="20"/>
        <end position="30"/>
    </location>
</feature>
<feature type="strand" evidence="7">
    <location>
        <begin position="34"/>
        <end position="41"/>
    </location>
</feature>
<feature type="helix" evidence="7">
    <location>
        <begin position="42"/>
        <end position="51"/>
    </location>
</feature>
<feature type="turn" evidence="7">
    <location>
        <begin position="52"/>
        <end position="54"/>
    </location>
</feature>
<feature type="strand" evidence="7">
    <location>
        <begin position="62"/>
        <end position="64"/>
    </location>
</feature>
<feature type="helix" evidence="7">
    <location>
        <begin position="70"/>
        <end position="84"/>
    </location>
</feature>
<feature type="strand" evidence="7">
    <location>
        <begin position="88"/>
        <end position="92"/>
    </location>
</feature>
<feature type="helix" evidence="7">
    <location>
        <begin position="99"/>
        <end position="101"/>
    </location>
</feature>
<feature type="strand" evidence="7">
    <location>
        <begin position="102"/>
        <end position="104"/>
    </location>
</feature>
<feature type="helix" evidence="7">
    <location>
        <begin position="106"/>
        <end position="108"/>
    </location>
</feature>
<feature type="helix" evidence="7">
    <location>
        <begin position="111"/>
        <end position="121"/>
    </location>
</feature>
<feature type="helix" evidence="7">
    <location>
        <begin position="123"/>
        <end position="133"/>
    </location>
</feature>
<feature type="strand" evidence="7">
    <location>
        <begin position="140"/>
        <end position="146"/>
    </location>
</feature>
<feature type="helix" evidence="7">
    <location>
        <begin position="148"/>
        <end position="150"/>
    </location>
</feature>
<feature type="turn" evidence="7">
    <location>
        <begin position="155"/>
        <end position="157"/>
    </location>
</feature>
<feature type="helix" evidence="7">
    <location>
        <begin position="158"/>
        <end position="178"/>
    </location>
</feature>
<feature type="helix" evidence="7">
    <location>
        <begin position="179"/>
        <end position="181"/>
    </location>
</feature>
<feature type="strand" evidence="7">
    <location>
        <begin position="183"/>
        <end position="190"/>
    </location>
</feature>
<feature type="helix" evidence="7">
    <location>
        <begin position="197"/>
        <end position="200"/>
    </location>
</feature>
<feature type="helix" evidence="7">
    <location>
        <begin position="204"/>
        <end position="214"/>
    </location>
</feature>
<feature type="helix" evidence="7">
    <location>
        <begin position="223"/>
        <end position="234"/>
    </location>
</feature>
<feature type="helix" evidence="7">
    <location>
        <begin position="236"/>
        <end position="238"/>
    </location>
</feature>
<feature type="strand" evidence="7">
    <location>
        <begin position="245"/>
        <end position="249"/>
    </location>
</feature>
<feature type="helix" evidence="7">
    <location>
        <begin position="252"/>
        <end position="254"/>
    </location>
</feature>
<sequence length="256" mass="28022">MLNLENKTYVIMGIANKRSIAFGVAKVLDQLGAKLVFTYRKERSRKELEKLLEQLNQPEAHLYQIDVQSDEEVINGFEQIGKDVGNIDGVYHSIAFANMEDLRGRFSETSREGFLLAQDISSYSLTIVAHEAKKLMPEGGSIVATTYLGGEFAVQNYNVMGVAKASLEANVKYLALDLGPDNIRVNAISASPIRTLSAKGVGGFNTILKEIEERAPLKRNVDQVEVGKTAAYLLSDLSSGVTGENIHVDSGFHAIK</sequence>
<keyword id="KW-0002">3D-structure</keyword>
<keyword id="KW-0275">Fatty acid biosynthesis</keyword>
<keyword id="KW-0276">Fatty acid metabolism</keyword>
<keyword id="KW-0444">Lipid biosynthesis</keyword>
<keyword id="KW-0443">Lipid metabolism</keyword>
<keyword id="KW-0520">NAD</keyword>
<keyword id="KW-0521">NADP</keyword>
<keyword id="KW-0560">Oxidoreductase</keyword>
<keyword id="KW-1185">Reference proteome</keyword>
<gene>
    <name type="primary">fabI</name>
    <name type="ordered locus">SAOUHSC_00947</name>
</gene>
<protein>
    <recommendedName>
        <fullName>Enoyl-[acyl-carrier-protein] reductase [NADPH] FabI</fullName>
        <shortName>ENR</shortName>
        <ecNumber>1.3.1.39</ecNumber>
    </recommendedName>
    <alternativeName>
        <fullName>NADPH-dependent enoyl-ACP reductase</fullName>
    </alternativeName>
</protein>